<keyword id="KW-1185">Reference proteome</keyword>
<keyword id="KW-0687">Ribonucleoprotein</keyword>
<keyword id="KW-0689">Ribosomal protein</keyword>
<keyword id="KW-0694">RNA-binding</keyword>
<keyword id="KW-0699">rRNA-binding</keyword>
<accession>B0C9F5</accession>
<feature type="chain" id="PRO_1000085957" description="Small ribosomal subunit protein uS4">
    <location>
        <begin position="1"/>
        <end position="202"/>
    </location>
</feature>
<feature type="domain" description="S4 RNA-binding" evidence="1">
    <location>
        <begin position="90"/>
        <end position="152"/>
    </location>
</feature>
<feature type="region of interest" description="Disordered" evidence="2">
    <location>
        <begin position="17"/>
        <end position="42"/>
    </location>
</feature>
<organism>
    <name type="scientific">Acaryochloris marina (strain MBIC 11017)</name>
    <dbReference type="NCBI Taxonomy" id="329726"/>
    <lineage>
        <taxon>Bacteria</taxon>
        <taxon>Bacillati</taxon>
        <taxon>Cyanobacteriota</taxon>
        <taxon>Cyanophyceae</taxon>
        <taxon>Acaryochloridales</taxon>
        <taxon>Acaryochloridaceae</taxon>
        <taxon>Acaryochloris</taxon>
    </lineage>
</organism>
<dbReference type="EMBL" id="CP000828">
    <property type="protein sequence ID" value="ABW28968.1"/>
    <property type="molecule type" value="Genomic_DNA"/>
</dbReference>
<dbReference type="RefSeq" id="WP_012164324.1">
    <property type="nucleotide sequence ID" value="NC_009925.1"/>
</dbReference>
<dbReference type="SMR" id="B0C9F5"/>
<dbReference type="STRING" id="329726.AM1_3983"/>
<dbReference type="KEGG" id="amr:AM1_3983"/>
<dbReference type="eggNOG" id="COG0522">
    <property type="taxonomic scope" value="Bacteria"/>
</dbReference>
<dbReference type="HOGENOM" id="CLU_092403_0_5_3"/>
<dbReference type="OrthoDB" id="9803672at2"/>
<dbReference type="Proteomes" id="UP000000268">
    <property type="component" value="Chromosome"/>
</dbReference>
<dbReference type="GO" id="GO:0015935">
    <property type="term" value="C:small ribosomal subunit"/>
    <property type="evidence" value="ECO:0007669"/>
    <property type="project" value="InterPro"/>
</dbReference>
<dbReference type="GO" id="GO:0019843">
    <property type="term" value="F:rRNA binding"/>
    <property type="evidence" value="ECO:0007669"/>
    <property type="project" value="UniProtKB-UniRule"/>
</dbReference>
<dbReference type="GO" id="GO:0003735">
    <property type="term" value="F:structural constituent of ribosome"/>
    <property type="evidence" value="ECO:0007669"/>
    <property type="project" value="InterPro"/>
</dbReference>
<dbReference type="GO" id="GO:0042274">
    <property type="term" value="P:ribosomal small subunit biogenesis"/>
    <property type="evidence" value="ECO:0007669"/>
    <property type="project" value="TreeGrafter"/>
</dbReference>
<dbReference type="GO" id="GO:0006412">
    <property type="term" value="P:translation"/>
    <property type="evidence" value="ECO:0007669"/>
    <property type="project" value="UniProtKB-UniRule"/>
</dbReference>
<dbReference type="CDD" id="cd00165">
    <property type="entry name" value="S4"/>
    <property type="match status" value="1"/>
</dbReference>
<dbReference type="FunFam" id="3.10.290.10:FF:000001">
    <property type="entry name" value="30S ribosomal protein S4"/>
    <property type="match status" value="1"/>
</dbReference>
<dbReference type="FunFam" id="1.10.1050.10:FF:000002">
    <property type="entry name" value="30S ribosomal protein S4, chloroplastic"/>
    <property type="match status" value="1"/>
</dbReference>
<dbReference type="Gene3D" id="1.10.1050.10">
    <property type="entry name" value="Ribosomal Protein S4 Delta 41, Chain A, domain 1"/>
    <property type="match status" value="1"/>
</dbReference>
<dbReference type="Gene3D" id="3.10.290.10">
    <property type="entry name" value="RNA-binding S4 domain"/>
    <property type="match status" value="1"/>
</dbReference>
<dbReference type="HAMAP" id="MF_01306_B">
    <property type="entry name" value="Ribosomal_uS4_B"/>
    <property type="match status" value="1"/>
</dbReference>
<dbReference type="InterPro" id="IPR022801">
    <property type="entry name" value="Ribosomal_uS4"/>
</dbReference>
<dbReference type="InterPro" id="IPR005709">
    <property type="entry name" value="Ribosomal_uS4_bac-type"/>
</dbReference>
<dbReference type="InterPro" id="IPR018079">
    <property type="entry name" value="Ribosomal_uS4_CS"/>
</dbReference>
<dbReference type="InterPro" id="IPR001912">
    <property type="entry name" value="Ribosomal_uS4_N"/>
</dbReference>
<dbReference type="InterPro" id="IPR002942">
    <property type="entry name" value="S4_RNA-bd"/>
</dbReference>
<dbReference type="InterPro" id="IPR036986">
    <property type="entry name" value="S4_RNA-bd_sf"/>
</dbReference>
<dbReference type="NCBIfam" id="NF003717">
    <property type="entry name" value="PRK05327.1"/>
    <property type="match status" value="1"/>
</dbReference>
<dbReference type="NCBIfam" id="TIGR01017">
    <property type="entry name" value="rpsD_bact"/>
    <property type="match status" value="1"/>
</dbReference>
<dbReference type="PANTHER" id="PTHR11831">
    <property type="entry name" value="30S 40S RIBOSOMAL PROTEIN"/>
    <property type="match status" value="1"/>
</dbReference>
<dbReference type="PANTHER" id="PTHR11831:SF4">
    <property type="entry name" value="SMALL RIBOSOMAL SUBUNIT PROTEIN US4M"/>
    <property type="match status" value="1"/>
</dbReference>
<dbReference type="Pfam" id="PF00163">
    <property type="entry name" value="Ribosomal_S4"/>
    <property type="match status" value="1"/>
</dbReference>
<dbReference type="Pfam" id="PF01479">
    <property type="entry name" value="S4"/>
    <property type="match status" value="1"/>
</dbReference>
<dbReference type="SMART" id="SM01390">
    <property type="entry name" value="Ribosomal_S4"/>
    <property type="match status" value="1"/>
</dbReference>
<dbReference type="SMART" id="SM00363">
    <property type="entry name" value="S4"/>
    <property type="match status" value="1"/>
</dbReference>
<dbReference type="SUPFAM" id="SSF55174">
    <property type="entry name" value="Alpha-L RNA-binding motif"/>
    <property type="match status" value="1"/>
</dbReference>
<dbReference type="PROSITE" id="PS00632">
    <property type="entry name" value="RIBOSOMAL_S4"/>
    <property type="match status" value="1"/>
</dbReference>
<dbReference type="PROSITE" id="PS50889">
    <property type="entry name" value="S4"/>
    <property type="match status" value="1"/>
</dbReference>
<sequence>MSRYRGPRLRVVRRLGELPGLSRKTPRRAYPPGQHGQARKKRSEYAAQLEEKQKLRFNYGLSERQLLRYVRKARRAGGSTGQTLLQLLEMRLDNTIFRLGMAPTIPAARQLVNHGHVLVNGRVVSIASYQCRPGDVIQSRDRDASRKLIETHMQFPGLANIPTHLDFDKNTLTGKVNGVIEREWIALEINELLVVEYYSRKG</sequence>
<proteinExistence type="inferred from homology"/>
<comment type="function">
    <text evidence="1">One of the primary rRNA binding proteins, it binds directly to 16S rRNA where it nucleates assembly of the body of the 30S subunit.</text>
</comment>
<comment type="function">
    <text evidence="1">With S5 and S12 plays an important role in translational accuracy.</text>
</comment>
<comment type="subunit">
    <text evidence="1">Part of the 30S ribosomal subunit. Contacts protein S5. The interaction surface between S4 and S5 is involved in control of translational fidelity.</text>
</comment>
<comment type="similarity">
    <text evidence="1">Belongs to the universal ribosomal protein uS4 family.</text>
</comment>
<evidence type="ECO:0000255" key="1">
    <source>
        <dbReference type="HAMAP-Rule" id="MF_01306"/>
    </source>
</evidence>
<evidence type="ECO:0000256" key="2">
    <source>
        <dbReference type="SAM" id="MobiDB-lite"/>
    </source>
</evidence>
<evidence type="ECO:0000305" key="3"/>
<protein>
    <recommendedName>
        <fullName evidence="1">Small ribosomal subunit protein uS4</fullName>
    </recommendedName>
    <alternativeName>
        <fullName evidence="3">30S ribosomal protein S4</fullName>
    </alternativeName>
</protein>
<gene>
    <name evidence="1" type="primary">rpsD</name>
    <name evidence="1" type="synonym">rps4</name>
    <name type="ordered locus">AM1_3983</name>
</gene>
<reference key="1">
    <citation type="journal article" date="2008" name="Proc. Natl. Acad. Sci. U.S.A.">
        <title>Niche adaptation and genome expansion in the chlorophyll d-producing cyanobacterium Acaryochloris marina.</title>
        <authorList>
            <person name="Swingley W.D."/>
            <person name="Chen M."/>
            <person name="Cheung P.C."/>
            <person name="Conrad A.L."/>
            <person name="Dejesa L.C."/>
            <person name="Hao J."/>
            <person name="Honchak B.M."/>
            <person name="Karbach L.E."/>
            <person name="Kurdoglu A."/>
            <person name="Lahiri S."/>
            <person name="Mastrian S.D."/>
            <person name="Miyashita H."/>
            <person name="Page L."/>
            <person name="Ramakrishna P."/>
            <person name="Satoh S."/>
            <person name="Sattley W.M."/>
            <person name="Shimada Y."/>
            <person name="Taylor H.L."/>
            <person name="Tomo T."/>
            <person name="Tsuchiya T."/>
            <person name="Wang Z.T."/>
            <person name="Raymond J."/>
            <person name="Mimuro M."/>
            <person name="Blankenship R.E."/>
            <person name="Touchman J.W."/>
        </authorList>
    </citation>
    <scope>NUCLEOTIDE SEQUENCE [LARGE SCALE GENOMIC DNA]</scope>
    <source>
        <strain>MBIC 11017</strain>
    </source>
</reference>
<name>RS4_ACAM1</name>